<organism>
    <name type="scientific">Bacillus cereus (strain ATCC 14579 / DSM 31 / CCUG 7414 / JCM 2152 / NBRC 15305 / NCIMB 9373 / NCTC 2599 / NRRL B-3711)</name>
    <dbReference type="NCBI Taxonomy" id="226900"/>
    <lineage>
        <taxon>Bacteria</taxon>
        <taxon>Bacillati</taxon>
        <taxon>Bacillota</taxon>
        <taxon>Bacilli</taxon>
        <taxon>Bacillales</taxon>
        <taxon>Bacillaceae</taxon>
        <taxon>Bacillus</taxon>
        <taxon>Bacillus cereus group</taxon>
    </lineage>
</organism>
<proteinExistence type="inferred from homology"/>
<feature type="chain" id="PRO_0000102615" description="Ribosome-binding factor A">
    <location>
        <begin position="1"/>
        <end position="118"/>
    </location>
</feature>
<sequence length="118" mass="13483">MKLRANRVGEQMKKELGDIISRKIKDPRIGFVTVTDVQVSGDLQIAKVYISVLGDEEQKENTLKGLAKAKGFIRSEIGQRIRLRKTPEITFEFDESIGYGHRIDTLLHEINKDGKREE</sequence>
<dbReference type="EMBL" id="AE016877">
    <property type="protein sequence ID" value="AAP10732.1"/>
    <property type="molecule type" value="Genomic_DNA"/>
</dbReference>
<dbReference type="RefSeq" id="NP_833531.1">
    <property type="nucleotide sequence ID" value="NC_004722.1"/>
</dbReference>
<dbReference type="RefSeq" id="WP_000776437.1">
    <property type="nucleotide sequence ID" value="NZ_CP138336.1"/>
</dbReference>
<dbReference type="SMR" id="Q819Y8"/>
<dbReference type="STRING" id="226900.BC_3809"/>
<dbReference type="GeneID" id="72450490"/>
<dbReference type="KEGG" id="bce:BC3809"/>
<dbReference type="PATRIC" id="fig|226900.8.peg.3926"/>
<dbReference type="HOGENOM" id="CLU_089475_6_3_9"/>
<dbReference type="OrthoDB" id="307788at2"/>
<dbReference type="PRO" id="PR:Q819Y8"/>
<dbReference type="Proteomes" id="UP000001417">
    <property type="component" value="Chromosome"/>
</dbReference>
<dbReference type="GO" id="GO:0005829">
    <property type="term" value="C:cytosol"/>
    <property type="evidence" value="ECO:0000318"/>
    <property type="project" value="GO_Central"/>
</dbReference>
<dbReference type="GO" id="GO:0043024">
    <property type="term" value="F:ribosomal small subunit binding"/>
    <property type="evidence" value="ECO:0000318"/>
    <property type="project" value="GO_Central"/>
</dbReference>
<dbReference type="GO" id="GO:0030490">
    <property type="term" value="P:maturation of SSU-rRNA"/>
    <property type="evidence" value="ECO:0007669"/>
    <property type="project" value="UniProtKB-UniRule"/>
</dbReference>
<dbReference type="GO" id="GO:0042254">
    <property type="term" value="P:ribosome biogenesis"/>
    <property type="evidence" value="ECO:0000318"/>
    <property type="project" value="GO_Central"/>
</dbReference>
<dbReference type="FunFam" id="3.30.300.20:FF:000009">
    <property type="entry name" value="Ribosome-binding factor A"/>
    <property type="match status" value="1"/>
</dbReference>
<dbReference type="Gene3D" id="3.30.300.20">
    <property type="match status" value="1"/>
</dbReference>
<dbReference type="HAMAP" id="MF_00003">
    <property type="entry name" value="RbfA"/>
    <property type="match status" value="1"/>
</dbReference>
<dbReference type="InterPro" id="IPR015946">
    <property type="entry name" value="KH_dom-like_a/b"/>
</dbReference>
<dbReference type="InterPro" id="IPR000238">
    <property type="entry name" value="RbfA"/>
</dbReference>
<dbReference type="InterPro" id="IPR023799">
    <property type="entry name" value="RbfA_dom_sf"/>
</dbReference>
<dbReference type="InterPro" id="IPR020053">
    <property type="entry name" value="Ribosome-bd_factorA_CS"/>
</dbReference>
<dbReference type="NCBIfam" id="TIGR00082">
    <property type="entry name" value="rbfA"/>
    <property type="match status" value="1"/>
</dbReference>
<dbReference type="PANTHER" id="PTHR33515">
    <property type="entry name" value="RIBOSOME-BINDING FACTOR A, CHLOROPLASTIC-RELATED"/>
    <property type="match status" value="1"/>
</dbReference>
<dbReference type="PANTHER" id="PTHR33515:SF1">
    <property type="entry name" value="RIBOSOME-BINDING FACTOR A, CHLOROPLASTIC-RELATED"/>
    <property type="match status" value="1"/>
</dbReference>
<dbReference type="Pfam" id="PF02033">
    <property type="entry name" value="RBFA"/>
    <property type="match status" value="1"/>
</dbReference>
<dbReference type="SUPFAM" id="SSF89919">
    <property type="entry name" value="Ribosome-binding factor A, RbfA"/>
    <property type="match status" value="1"/>
</dbReference>
<dbReference type="PROSITE" id="PS01319">
    <property type="entry name" value="RBFA"/>
    <property type="match status" value="1"/>
</dbReference>
<keyword id="KW-0963">Cytoplasm</keyword>
<keyword id="KW-1185">Reference proteome</keyword>
<keyword id="KW-0690">Ribosome biogenesis</keyword>
<evidence type="ECO:0000255" key="1">
    <source>
        <dbReference type="HAMAP-Rule" id="MF_00003"/>
    </source>
</evidence>
<gene>
    <name evidence="1" type="primary">rbfA</name>
    <name type="ordered locus">BC_3809</name>
</gene>
<name>RBFA_BACCR</name>
<accession>Q819Y8</accession>
<comment type="function">
    <text evidence="1">One of several proteins that assist in the late maturation steps of the functional core of the 30S ribosomal subunit. Associates with free 30S ribosomal subunits (but not with 30S subunits that are part of 70S ribosomes or polysomes). Required for efficient processing of 16S rRNA. May interact with the 5'-terminal helix region of 16S rRNA.</text>
</comment>
<comment type="subunit">
    <text evidence="1">Monomer. Binds 30S ribosomal subunits, but not 50S ribosomal subunits or 70S ribosomes.</text>
</comment>
<comment type="subcellular location">
    <subcellularLocation>
        <location evidence="1">Cytoplasm</location>
    </subcellularLocation>
</comment>
<comment type="similarity">
    <text evidence="1">Belongs to the RbfA family.</text>
</comment>
<reference key="1">
    <citation type="journal article" date="2003" name="Nature">
        <title>Genome sequence of Bacillus cereus and comparative analysis with Bacillus anthracis.</title>
        <authorList>
            <person name="Ivanova N."/>
            <person name="Sorokin A."/>
            <person name="Anderson I."/>
            <person name="Galleron N."/>
            <person name="Candelon B."/>
            <person name="Kapatral V."/>
            <person name="Bhattacharyya A."/>
            <person name="Reznik G."/>
            <person name="Mikhailova N."/>
            <person name="Lapidus A."/>
            <person name="Chu L."/>
            <person name="Mazur M."/>
            <person name="Goltsman E."/>
            <person name="Larsen N."/>
            <person name="D'Souza M."/>
            <person name="Walunas T."/>
            <person name="Grechkin Y."/>
            <person name="Pusch G."/>
            <person name="Haselkorn R."/>
            <person name="Fonstein M."/>
            <person name="Ehrlich S.D."/>
            <person name="Overbeek R."/>
            <person name="Kyrpides N.C."/>
        </authorList>
    </citation>
    <scope>NUCLEOTIDE SEQUENCE [LARGE SCALE GENOMIC DNA]</scope>
    <source>
        <strain>ATCC 14579 / DSM 31 / CCUG 7414 / JCM 2152 / NBRC 15305 / NCIMB 9373 / NCTC 2599 / NRRL B-3711</strain>
    </source>
</reference>
<protein>
    <recommendedName>
        <fullName evidence="1">Ribosome-binding factor A</fullName>
    </recommendedName>
</protein>